<sequence length="281" mass="31561">MTTTRAKSKFQSLSACRFTPLPEPNTSPSTYSKTLPKPNSSPGTDGTFPTPFPLAVITPIKTLKSVTLSDWWLTKKGKDLCIKGFESNGASGVRLFSSGTISKRHESTTLEAIDGITISINGFINRSRCLENGISIEVCNRFRLGFPYDWEDYNEEEEEKKKKNVDISFDDIPVNRYQDLYSLEGCLKDKILDDVVGSLRDLVCQKSDKACEKSRVGDVDDDDDDDDDKSLVSRVVGVKTRGMLRRREEYEASIGKRVATMSGKRVVTVSKKKNRRRSFGW</sequence>
<comment type="function">
    <text evidence="2">Required for normal embryo development.</text>
</comment>
<comment type="sequence caution" evidence="4">
    <conflict type="erroneous gene model prediction">
        <sequence resource="EMBL-CDS" id="AAG50760"/>
    </conflict>
    <text>The predicted gene At1g58210 has been split into 2 genes: At1g58210 and At1g58215.</text>
</comment>
<protein>
    <recommendedName>
        <fullName evidence="3">Protein EMBRYO DEFECTIVE 1674</fullName>
    </recommendedName>
</protein>
<feature type="chain" id="PRO_0000431848" description="Protein EMBRYO DEFECTIVE 1674">
    <location>
        <begin position="1"/>
        <end position="281"/>
    </location>
</feature>
<feature type="domain" description="SANTA">
    <location>
        <begin position="66"/>
        <end position="153"/>
    </location>
</feature>
<feature type="region of interest" description="Disordered" evidence="1">
    <location>
        <begin position="1"/>
        <end position="47"/>
    </location>
</feature>
<feature type="compositionally biased region" description="Polar residues" evidence="1">
    <location>
        <begin position="1"/>
        <end position="14"/>
    </location>
</feature>
<feature type="compositionally biased region" description="Polar residues" evidence="1">
    <location>
        <begin position="24"/>
        <end position="41"/>
    </location>
</feature>
<evidence type="ECO:0000256" key="1">
    <source>
        <dbReference type="SAM" id="MobiDB-lite"/>
    </source>
</evidence>
<evidence type="ECO:0000269" key="2">
    <source>
    </source>
</evidence>
<evidence type="ECO:0000303" key="3">
    <source>
    </source>
</evidence>
<evidence type="ECO:0000305" key="4"/>
<evidence type="ECO:0000312" key="5">
    <source>
        <dbReference type="Araport" id="AT1G58210"/>
    </source>
</evidence>
<evidence type="ECO:0000312" key="6">
    <source>
        <dbReference type="EMBL" id="AAG50760.1"/>
    </source>
</evidence>
<evidence type="ECO:0000312" key="7">
    <source>
        <dbReference type="EMBL" id="AAM13159.1"/>
    </source>
</evidence>
<proteinExistence type="evidence at transcript level"/>
<dbReference type="EMBL" id="AC079131">
    <property type="protein sequence ID" value="AAG50760.1"/>
    <property type="status" value="ALT_SEQ"/>
    <property type="molecule type" value="Genomic_DNA"/>
</dbReference>
<dbReference type="EMBL" id="CP002684">
    <property type="protein sequence ID" value="AEE33514.2"/>
    <property type="molecule type" value="Genomic_DNA"/>
</dbReference>
<dbReference type="EMBL" id="AY093160">
    <property type="protein sequence ID" value="AAM13159.1"/>
    <property type="molecule type" value="mRNA"/>
</dbReference>
<dbReference type="EMBL" id="BT002113">
    <property type="protein sequence ID" value="AAN72124.1"/>
    <property type="molecule type" value="mRNA"/>
</dbReference>
<dbReference type="RefSeq" id="NP_001319264.1">
    <property type="nucleotide sequence ID" value="NM_001333821.1"/>
</dbReference>
<dbReference type="FunCoup" id="Q8RWD7">
    <property type="interactions" value="33"/>
</dbReference>
<dbReference type="STRING" id="3702.Q8RWD7"/>
<dbReference type="iPTMnet" id="Q8RWD7"/>
<dbReference type="ProteomicsDB" id="220307"/>
<dbReference type="EnsemblPlants" id="AT1G58210.1">
    <property type="protein sequence ID" value="AT1G58210.1"/>
    <property type="gene ID" value="AT1G58210"/>
</dbReference>
<dbReference type="GeneID" id="28717376"/>
<dbReference type="Gramene" id="AT1G58210.1">
    <property type="protein sequence ID" value="AT1G58210.1"/>
    <property type="gene ID" value="AT1G58210"/>
</dbReference>
<dbReference type="KEGG" id="ath:AT1G58210"/>
<dbReference type="Araport" id="AT1G58210"/>
<dbReference type="TAIR" id="AT1G58210">
    <property type="gene designation" value="EMB1674"/>
</dbReference>
<dbReference type="HOGENOM" id="CLU_004324_0_0_1"/>
<dbReference type="InParanoid" id="Q8RWD7"/>
<dbReference type="OMA" id="YHWRDYT"/>
<dbReference type="PRO" id="PR:Q8RWD7"/>
<dbReference type="Proteomes" id="UP000006548">
    <property type="component" value="Chromosome 1"/>
</dbReference>
<dbReference type="ExpressionAtlas" id="Q8RWD7">
    <property type="expression patterns" value="baseline and differential"/>
</dbReference>
<dbReference type="InterPro" id="IPR053090">
    <property type="entry name" value="Centromere_KNL-2_homolog"/>
</dbReference>
<dbReference type="InterPro" id="IPR015216">
    <property type="entry name" value="SANTA"/>
</dbReference>
<dbReference type="PANTHER" id="PTHR35311">
    <property type="entry name" value="KINETOCHORE-ASSOCIATED PROTEIN KNL-2 HOMOLOG"/>
    <property type="match status" value="1"/>
</dbReference>
<dbReference type="PANTHER" id="PTHR35311:SF1">
    <property type="entry name" value="PROTEIN EMBRYO DEFECTIVE 1674"/>
    <property type="match status" value="1"/>
</dbReference>
<dbReference type="Pfam" id="PF09133">
    <property type="entry name" value="SANTA"/>
    <property type="match status" value="1"/>
</dbReference>
<name>EMB74_ARATH</name>
<accession>Q8RWD7</accession>
<accession>Q9C6Q9</accession>
<organism evidence="7">
    <name type="scientific">Arabidopsis thaliana</name>
    <name type="common">Mouse-ear cress</name>
    <dbReference type="NCBI Taxonomy" id="3702"/>
    <lineage>
        <taxon>Eukaryota</taxon>
        <taxon>Viridiplantae</taxon>
        <taxon>Streptophyta</taxon>
        <taxon>Embryophyta</taxon>
        <taxon>Tracheophyta</taxon>
        <taxon>Spermatophyta</taxon>
        <taxon>Magnoliopsida</taxon>
        <taxon>eudicotyledons</taxon>
        <taxon>Gunneridae</taxon>
        <taxon>Pentapetalae</taxon>
        <taxon>rosids</taxon>
        <taxon>malvids</taxon>
        <taxon>Brassicales</taxon>
        <taxon>Brassicaceae</taxon>
        <taxon>Camelineae</taxon>
        <taxon>Arabidopsis</taxon>
    </lineage>
</organism>
<gene>
    <name evidence="3" type="primary">EMB1674</name>
    <name evidence="5" type="ordered locus">At1g58210</name>
    <name evidence="6" type="ORF">T18I24.12</name>
</gene>
<keyword id="KW-0217">Developmental protein</keyword>
<keyword id="KW-1185">Reference proteome</keyword>
<reference key="1">
    <citation type="journal article" date="2000" name="Nature">
        <title>Sequence and analysis of chromosome 1 of the plant Arabidopsis thaliana.</title>
        <authorList>
            <person name="Theologis A."/>
            <person name="Ecker J.R."/>
            <person name="Palm C.J."/>
            <person name="Federspiel N.A."/>
            <person name="Kaul S."/>
            <person name="White O."/>
            <person name="Alonso J."/>
            <person name="Altafi H."/>
            <person name="Araujo R."/>
            <person name="Bowman C.L."/>
            <person name="Brooks S.Y."/>
            <person name="Buehler E."/>
            <person name="Chan A."/>
            <person name="Chao Q."/>
            <person name="Chen H."/>
            <person name="Cheuk R.F."/>
            <person name="Chin C.W."/>
            <person name="Chung M.K."/>
            <person name="Conn L."/>
            <person name="Conway A.B."/>
            <person name="Conway A.R."/>
            <person name="Creasy T.H."/>
            <person name="Dewar K."/>
            <person name="Dunn P."/>
            <person name="Etgu P."/>
            <person name="Feldblyum T.V."/>
            <person name="Feng J.-D."/>
            <person name="Fong B."/>
            <person name="Fujii C.Y."/>
            <person name="Gill J.E."/>
            <person name="Goldsmith A.D."/>
            <person name="Haas B."/>
            <person name="Hansen N.F."/>
            <person name="Hughes B."/>
            <person name="Huizar L."/>
            <person name="Hunter J.L."/>
            <person name="Jenkins J."/>
            <person name="Johnson-Hopson C."/>
            <person name="Khan S."/>
            <person name="Khaykin E."/>
            <person name="Kim C.J."/>
            <person name="Koo H.L."/>
            <person name="Kremenetskaia I."/>
            <person name="Kurtz D.B."/>
            <person name="Kwan A."/>
            <person name="Lam B."/>
            <person name="Langin-Hooper S."/>
            <person name="Lee A."/>
            <person name="Lee J.M."/>
            <person name="Lenz C.A."/>
            <person name="Li J.H."/>
            <person name="Li Y.-P."/>
            <person name="Lin X."/>
            <person name="Liu S.X."/>
            <person name="Liu Z.A."/>
            <person name="Luros J.S."/>
            <person name="Maiti R."/>
            <person name="Marziali A."/>
            <person name="Militscher J."/>
            <person name="Miranda M."/>
            <person name="Nguyen M."/>
            <person name="Nierman W.C."/>
            <person name="Osborne B.I."/>
            <person name="Pai G."/>
            <person name="Peterson J."/>
            <person name="Pham P.K."/>
            <person name="Rizzo M."/>
            <person name="Rooney T."/>
            <person name="Rowley D."/>
            <person name="Sakano H."/>
            <person name="Salzberg S.L."/>
            <person name="Schwartz J.R."/>
            <person name="Shinn P."/>
            <person name="Southwick A.M."/>
            <person name="Sun H."/>
            <person name="Tallon L.J."/>
            <person name="Tambunga G."/>
            <person name="Toriumi M.J."/>
            <person name="Town C.D."/>
            <person name="Utterback T."/>
            <person name="Van Aken S."/>
            <person name="Vaysberg M."/>
            <person name="Vysotskaia V.S."/>
            <person name="Walker M."/>
            <person name="Wu D."/>
            <person name="Yu G."/>
            <person name="Fraser C.M."/>
            <person name="Venter J.C."/>
            <person name="Davis R.W."/>
        </authorList>
    </citation>
    <scope>NUCLEOTIDE SEQUENCE [LARGE SCALE GENOMIC DNA]</scope>
    <source>
        <strain>cv. Columbia</strain>
    </source>
</reference>
<reference key="2">
    <citation type="journal article" date="2017" name="Plant J.">
        <title>Araport11: a complete reannotation of the Arabidopsis thaliana reference genome.</title>
        <authorList>
            <person name="Cheng C.Y."/>
            <person name="Krishnakumar V."/>
            <person name="Chan A.P."/>
            <person name="Thibaud-Nissen F."/>
            <person name="Schobel S."/>
            <person name="Town C.D."/>
        </authorList>
    </citation>
    <scope>GENOME REANNOTATION</scope>
    <source>
        <strain>cv. Columbia</strain>
    </source>
</reference>
<reference key="3">
    <citation type="journal article" date="2003" name="Science">
        <title>Empirical analysis of transcriptional activity in the Arabidopsis genome.</title>
        <authorList>
            <person name="Yamada K."/>
            <person name="Lim J."/>
            <person name="Dale J.M."/>
            <person name="Chen H."/>
            <person name="Shinn P."/>
            <person name="Palm C.J."/>
            <person name="Southwick A.M."/>
            <person name="Wu H.C."/>
            <person name="Kim C.J."/>
            <person name="Nguyen M."/>
            <person name="Pham P.K."/>
            <person name="Cheuk R.F."/>
            <person name="Karlin-Newmann G."/>
            <person name="Liu S.X."/>
            <person name="Lam B."/>
            <person name="Sakano H."/>
            <person name="Wu T."/>
            <person name="Yu G."/>
            <person name="Miranda M."/>
            <person name="Quach H.L."/>
            <person name="Tripp M."/>
            <person name="Chang C.H."/>
            <person name="Lee J.M."/>
            <person name="Toriumi M.J."/>
            <person name="Chan M.M."/>
            <person name="Tang C.C."/>
            <person name="Onodera C.S."/>
            <person name="Deng J.M."/>
            <person name="Akiyama K."/>
            <person name="Ansari Y."/>
            <person name="Arakawa T."/>
            <person name="Banh J."/>
            <person name="Banno F."/>
            <person name="Bowser L."/>
            <person name="Brooks S.Y."/>
            <person name="Carninci P."/>
            <person name="Chao Q."/>
            <person name="Choy N."/>
            <person name="Enju A."/>
            <person name="Goldsmith A.D."/>
            <person name="Gurjal M."/>
            <person name="Hansen N.F."/>
            <person name="Hayashizaki Y."/>
            <person name="Johnson-Hopson C."/>
            <person name="Hsuan V.W."/>
            <person name="Iida K."/>
            <person name="Karnes M."/>
            <person name="Khan S."/>
            <person name="Koesema E."/>
            <person name="Ishida J."/>
            <person name="Jiang P.X."/>
            <person name="Jones T."/>
            <person name="Kawai J."/>
            <person name="Kamiya A."/>
            <person name="Meyers C."/>
            <person name="Nakajima M."/>
            <person name="Narusaka M."/>
            <person name="Seki M."/>
            <person name="Sakurai T."/>
            <person name="Satou M."/>
            <person name="Tamse R."/>
            <person name="Vaysberg M."/>
            <person name="Wallender E.K."/>
            <person name="Wong C."/>
            <person name="Yamamura Y."/>
            <person name="Yuan S."/>
            <person name="Shinozaki K."/>
            <person name="Davis R.W."/>
            <person name="Theologis A."/>
            <person name="Ecker J.R."/>
        </authorList>
    </citation>
    <scope>NUCLEOTIDE SEQUENCE [LARGE SCALE MRNA]</scope>
    <source>
        <strain>cv. Columbia</strain>
    </source>
</reference>
<reference key="4">
    <citation type="journal article" date="2004" name="Plant Physiol.">
        <title>Identification of genes required for embryo development in Arabidopsis.</title>
        <authorList>
            <person name="Tzafrir I."/>
            <person name="Pena-Muralla R."/>
            <person name="Dickerman A."/>
            <person name="Berg M."/>
            <person name="Rogers R."/>
            <person name="Hutchens S."/>
            <person name="Sweeney T.C."/>
            <person name="McElver J."/>
            <person name="Aux G."/>
            <person name="Patton D."/>
            <person name="Meinke D."/>
        </authorList>
    </citation>
    <scope>FUNCTION</scope>
</reference>